<proteinExistence type="inferred from homology"/>
<accession>B0RSN5</accession>
<organism>
    <name type="scientific">Xanthomonas campestris pv. campestris (strain B100)</name>
    <dbReference type="NCBI Taxonomy" id="509169"/>
    <lineage>
        <taxon>Bacteria</taxon>
        <taxon>Pseudomonadati</taxon>
        <taxon>Pseudomonadota</taxon>
        <taxon>Gammaproteobacteria</taxon>
        <taxon>Lysobacterales</taxon>
        <taxon>Lysobacteraceae</taxon>
        <taxon>Xanthomonas</taxon>
    </lineage>
</organism>
<gene>
    <name type="ordered locus">xcc-b100_2118</name>
</gene>
<evidence type="ECO:0000255" key="1">
    <source>
        <dbReference type="HAMAP-Rule" id="MF_00646"/>
    </source>
</evidence>
<comment type="similarity">
    <text evidence="1">Belongs to the elongation factor P family.</text>
</comment>
<dbReference type="EMBL" id="AM920689">
    <property type="protein sequence ID" value="CAP51471.1"/>
    <property type="molecule type" value="Genomic_DNA"/>
</dbReference>
<dbReference type="SMR" id="B0RSN5"/>
<dbReference type="KEGG" id="xca:xcc-b100_2118"/>
<dbReference type="HOGENOM" id="CLU_074944_2_0_6"/>
<dbReference type="Proteomes" id="UP000001188">
    <property type="component" value="Chromosome"/>
</dbReference>
<dbReference type="GO" id="GO:0005737">
    <property type="term" value="C:cytoplasm"/>
    <property type="evidence" value="ECO:0007669"/>
    <property type="project" value="InterPro"/>
</dbReference>
<dbReference type="GO" id="GO:0003746">
    <property type="term" value="F:translation elongation factor activity"/>
    <property type="evidence" value="ECO:0007669"/>
    <property type="project" value="UniProtKB-UniRule"/>
</dbReference>
<dbReference type="GO" id="GO:0043043">
    <property type="term" value="P:peptide biosynthetic process"/>
    <property type="evidence" value="ECO:0007669"/>
    <property type="project" value="InterPro"/>
</dbReference>
<dbReference type="CDD" id="cd04470">
    <property type="entry name" value="S1_EF-P_repeat_1"/>
    <property type="match status" value="1"/>
</dbReference>
<dbReference type="CDD" id="cd05794">
    <property type="entry name" value="S1_EF-P_repeat_2"/>
    <property type="match status" value="1"/>
</dbReference>
<dbReference type="FunFam" id="2.40.50.140:FF:000004">
    <property type="entry name" value="Elongation factor P"/>
    <property type="match status" value="1"/>
</dbReference>
<dbReference type="FunFam" id="2.30.30.30:FF:000036">
    <property type="entry name" value="Elongation factor P-like protein"/>
    <property type="match status" value="1"/>
</dbReference>
<dbReference type="FunFam" id="2.40.50.140:FF:000233">
    <property type="entry name" value="Elongation factor P-like protein"/>
    <property type="match status" value="1"/>
</dbReference>
<dbReference type="Gene3D" id="2.30.30.30">
    <property type="match status" value="1"/>
</dbReference>
<dbReference type="Gene3D" id="2.40.50.140">
    <property type="entry name" value="Nucleic acid-binding proteins"/>
    <property type="match status" value="2"/>
</dbReference>
<dbReference type="HAMAP" id="MF_00646">
    <property type="entry name" value="EFP"/>
    <property type="match status" value="1"/>
</dbReference>
<dbReference type="InterPro" id="IPR015365">
    <property type="entry name" value="Elong-fact-P_C"/>
</dbReference>
<dbReference type="InterPro" id="IPR012340">
    <property type="entry name" value="NA-bd_OB-fold"/>
</dbReference>
<dbReference type="InterPro" id="IPR014722">
    <property type="entry name" value="Rib_uL2_dom2"/>
</dbReference>
<dbReference type="InterPro" id="IPR020599">
    <property type="entry name" value="Transl_elong_fac_P/YeiP"/>
</dbReference>
<dbReference type="InterPro" id="IPR013185">
    <property type="entry name" value="Transl_elong_KOW-like"/>
</dbReference>
<dbReference type="InterPro" id="IPR011897">
    <property type="entry name" value="Transl_elong_p-like_YeiP"/>
</dbReference>
<dbReference type="InterPro" id="IPR001059">
    <property type="entry name" value="Transl_elong_P/YeiP_cen"/>
</dbReference>
<dbReference type="InterPro" id="IPR013852">
    <property type="entry name" value="Transl_elong_P/YeiP_CS"/>
</dbReference>
<dbReference type="InterPro" id="IPR008991">
    <property type="entry name" value="Translation_prot_SH3-like_sf"/>
</dbReference>
<dbReference type="NCBIfam" id="NF001810">
    <property type="entry name" value="PRK00529.1"/>
    <property type="match status" value="1"/>
</dbReference>
<dbReference type="NCBIfam" id="NF003392">
    <property type="entry name" value="PRK04542.1"/>
    <property type="match status" value="1"/>
</dbReference>
<dbReference type="NCBIfam" id="TIGR02178">
    <property type="entry name" value="yeiP"/>
    <property type="match status" value="1"/>
</dbReference>
<dbReference type="PANTHER" id="PTHR30053">
    <property type="entry name" value="ELONGATION FACTOR P"/>
    <property type="match status" value="1"/>
</dbReference>
<dbReference type="PANTHER" id="PTHR30053:SF14">
    <property type="entry name" value="TRANSLATION ELONGATION FACTOR KOW-LIKE DOMAIN-CONTAINING PROTEIN"/>
    <property type="match status" value="1"/>
</dbReference>
<dbReference type="Pfam" id="PF01132">
    <property type="entry name" value="EFP"/>
    <property type="match status" value="1"/>
</dbReference>
<dbReference type="Pfam" id="PF08207">
    <property type="entry name" value="EFP_N"/>
    <property type="match status" value="1"/>
</dbReference>
<dbReference type="Pfam" id="PF09285">
    <property type="entry name" value="Elong-fact-P_C"/>
    <property type="match status" value="1"/>
</dbReference>
<dbReference type="PIRSF" id="PIRSF005901">
    <property type="entry name" value="EF-P"/>
    <property type="match status" value="1"/>
</dbReference>
<dbReference type="SMART" id="SM01185">
    <property type="entry name" value="EFP"/>
    <property type="match status" value="1"/>
</dbReference>
<dbReference type="SMART" id="SM00841">
    <property type="entry name" value="Elong-fact-P_C"/>
    <property type="match status" value="1"/>
</dbReference>
<dbReference type="SUPFAM" id="SSF50249">
    <property type="entry name" value="Nucleic acid-binding proteins"/>
    <property type="match status" value="2"/>
</dbReference>
<dbReference type="SUPFAM" id="SSF50104">
    <property type="entry name" value="Translation proteins SH3-like domain"/>
    <property type="match status" value="1"/>
</dbReference>
<dbReference type="PROSITE" id="PS01275">
    <property type="entry name" value="EFP"/>
    <property type="match status" value="1"/>
</dbReference>
<feature type="chain" id="PRO_1000130929" description="Elongation factor P-like protein">
    <location>
        <begin position="1"/>
        <end position="188"/>
    </location>
</feature>
<sequence>MKANDIKKGNVVEYNGGIYQIRDIERSSPQGRGGNVRFRFIMYSVPGGAKLDASFDADDNLPEVELLRRQSTYSYKDGEAFVFMDDEDYTPYMLDAEVIGTDAGYITDGLTGIFVQVIDDQPVAVQLPQTVTLEVVETPPELKGGTATKRPKPAKLNTGLEIMVPEYITNGERVLVNTTTGEFAGRAD</sequence>
<name>EFPL_XANCB</name>
<protein>
    <recommendedName>
        <fullName evidence="1">Elongation factor P-like protein</fullName>
    </recommendedName>
</protein>
<reference key="1">
    <citation type="journal article" date="2008" name="J. Biotechnol.">
        <title>The genome of Xanthomonas campestris pv. campestris B100 and its use for the reconstruction of metabolic pathways involved in xanthan biosynthesis.</title>
        <authorList>
            <person name="Vorhoelter F.-J."/>
            <person name="Schneiker S."/>
            <person name="Goesmann A."/>
            <person name="Krause L."/>
            <person name="Bekel T."/>
            <person name="Kaiser O."/>
            <person name="Linke B."/>
            <person name="Patschkowski T."/>
            <person name="Rueckert C."/>
            <person name="Schmid J."/>
            <person name="Sidhu V.K."/>
            <person name="Sieber V."/>
            <person name="Tauch A."/>
            <person name="Watt S.A."/>
            <person name="Weisshaar B."/>
            <person name="Becker A."/>
            <person name="Niehaus K."/>
            <person name="Puehler A."/>
        </authorList>
    </citation>
    <scope>NUCLEOTIDE SEQUENCE [LARGE SCALE GENOMIC DNA]</scope>
    <source>
        <strain>B100</strain>
    </source>
</reference>